<keyword id="KW-0067">ATP-binding</keyword>
<keyword id="KW-1003">Cell membrane</keyword>
<keyword id="KW-0378">Hydrolase</keyword>
<keyword id="KW-0418">Kinase</keyword>
<keyword id="KW-0472">Membrane</keyword>
<keyword id="KW-0547">Nucleotide-binding</keyword>
<keyword id="KW-0597">Phosphoprotein</keyword>
<keyword id="KW-0808">Transferase</keyword>
<keyword id="KW-0812">Transmembrane</keyword>
<keyword id="KW-1133">Transmembrane helix</keyword>
<keyword id="KW-0902">Two-component regulatory system</keyword>
<reference key="1">
    <citation type="journal article" date="2005" name="J. Bacteriol.">
        <title>Insights on evolution of virulence and resistance from the complete genome analysis of an early methicillin-resistant Staphylococcus aureus strain and a biofilm-producing methicillin-resistant Staphylococcus epidermidis strain.</title>
        <authorList>
            <person name="Gill S.R."/>
            <person name="Fouts D.E."/>
            <person name="Archer G.L."/>
            <person name="Mongodin E.F."/>
            <person name="DeBoy R.T."/>
            <person name="Ravel J."/>
            <person name="Paulsen I.T."/>
            <person name="Kolonay J.F."/>
            <person name="Brinkac L.M."/>
            <person name="Beanan M.J."/>
            <person name="Dodson R.J."/>
            <person name="Daugherty S.C."/>
            <person name="Madupu R."/>
            <person name="Angiuoli S.V."/>
            <person name="Durkin A.S."/>
            <person name="Haft D.H."/>
            <person name="Vamathevan J.J."/>
            <person name="Khouri H."/>
            <person name="Utterback T.R."/>
            <person name="Lee C."/>
            <person name="Dimitrov G."/>
            <person name="Jiang L."/>
            <person name="Qin H."/>
            <person name="Weidman J."/>
            <person name="Tran K."/>
            <person name="Kang K.H."/>
            <person name="Hance I.R."/>
            <person name="Nelson K.E."/>
            <person name="Fraser C.M."/>
        </authorList>
    </citation>
    <scope>NUCLEOTIDE SEQUENCE [LARGE SCALE GENOMIC DNA]</scope>
    <source>
        <strain>COL</strain>
    </source>
</reference>
<feature type="chain" id="PRO_0000074792" description="Sensor histidine kinase/phosphatase LytS">
    <location>
        <begin position="1"/>
        <end position="584"/>
    </location>
</feature>
<feature type="transmembrane region" description="Helical" evidence="3">
    <location>
        <begin position="6"/>
        <end position="28"/>
    </location>
</feature>
<feature type="transmembrane region" description="Helical" evidence="3">
    <location>
        <begin position="40"/>
        <end position="62"/>
    </location>
</feature>
<feature type="transmembrane region" description="Helical" evidence="3">
    <location>
        <begin position="88"/>
        <end position="110"/>
    </location>
</feature>
<feature type="transmembrane region" description="Helical" evidence="3">
    <location>
        <begin position="123"/>
        <end position="140"/>
    </location>
</feature>
<feature type="transmembrane region" description="Helical" evidence="3">
    <location>
        <begin position="155"/>
        <end position="172"/>
    </location>
</feature>
<feature type="transmembrane region" description="Helical" evidence="3">
    <location>
        <begin position="184"/>
        <end position="206"/>
    </location>
</feature>
<feature type="domain" description="GAF">
    <location>
        <begin position="311"/>
        <end position="362"/>
    </location>
</feature>
<feature type="domain" description="Histidine kinase">
    <location>
        <begin position="363"/>
        <end position="580"/>
    </location>
</feature>
<feature type="modified residue" description="Phosphohistidine; by autocatalysis" evidence="1">
    <location>
        <position position="390"/>
    </location>
</feature>
<proteinExistence type="inferred from homology"/>
<protein>
    <recommendedName>
        <fullName>Sensor histidine kinase/phosphatase LytS</fullName>
        <ecNumber evidence="2">2.7.13.3</ecNumber>
        <ecNumber evidence="2">3.1.3.-</ecNumber>
    </recommendedName>
    <alternativeName>
        <fullName>Autolysin sensor kinase</fullName>
    </alternativeName>
</protein>
<sequence>MLSLTMLLLERVGLIIILAYVLMNIPYFKNLMNRRRTWKARWQLCIIFSLFALMSNLTGIVIDHQHSLSGSVYFRLDDDVSLANTRVLTIGVAGLVGGPFVGLFVGVISGIFRVYMGGADAQVYLISSIFIGIIAGYFGLQAQRRKRYPSIAKSAMIGIVMEMIQMLSILTFSHDKAYAVDLISLIALPMIIVNSVGTAIFMSIIISTLKQEEQMKAVQTHDVLQLMNQTLPYFKEGLNRESAQQIAMIIKNLMKVSAVAITSKNEILSHVGAGSDHHIPTNEILTSLSKDVLKSGKLKEVHTKEEIGCSHPNCPLRAAIVIPLEMHGSIVGTLKMYFTNPNDLTFVERQLAEGLANIFSSQIELGEAETQSKLLKDAEIKSLQAQVSPHFFFNSINTISALVRINSEKARELLLELSYFFRANLQGSKQHTITLDKELSQVRAYLSLEQARYPGRFNININVEDKYRDVLVPPFLIQILVENAIKHAFTNRKQGNDIDVSVIKETATHVRIIVQDNGQGISKDKMHLLGETSVESESGTGSALENLNLRLKGLFGKSAALQFESTSSGTTFWCVLPYERQEEE</sequence>
<organism>
    <name type="scientific">Staphylococcus aureus (strain COL)</name>
    <dbReference type="NCBI Taxonomy" id="93062"/>
    <lineage>
        <taxon>Bacteria</taxon>
        <taxon>Bacillati</taxon>
        <taxon>Bacillota</taxon>
        <taxon>Bacilli</taxon>
        <taxon>Bacillales</taxon>
        <taxon>Staphylococcaceae</taxon>
        <taxon>Staphylococcus</taxon>
    </lineage>
</organism>
<gene>
    <name type="primary">lytS</name>
    <name type="ordered locus">SACOL0245</name>
</gene>
<dbReference type="EC" id="2.7.13.3" evidence="2"/>
<dbReference type="EC" id="3.1.3.-" evidence="2"/>
<dbReference type="EMBL" id="CP000046">
    <property type="protein sequence ID" value="AAW38800.1"/>
    <property type="molecule type" value="Genomic_DNA"/>
</dbReference>
<dbReference type="RefSeq" id="WP_000950281.1">
    <property type="nucleotide sequence ID" value="NZ_JBGOFO010000001.1"/>
</dbReference>
<dbReference type="SMR" id="Q5HJB6"/>
<dbReference type="KEGG" id="sac:SACOL0245"/>
<dbReference type="HOGENOM" id="CLU_020473_3_3_9"/>
<dbReference type="Proteomes" id="UP000000530">
    <property type="component" value="Chromosome"/>
</dbReference>
<dbReference type="GO" id="GO:0005886">
    <property type="term" value="C:plasma membrane"/>
    <property type="evidence" value="ECO:0007669"/>
    <property type="project" value="UniProtKB-SubCell"/>
</dbReference>
<dbReference type="GO" id="GO:0005524">
    <property type="term" value="F:ATP binding"/>
    <property type="evidence" value="ECO:0007669"/>
    <property type="project" value="UniProtKB-KW"/>
</dbReference>
<dbReference type="GO" id="GO:0016787">
    <property type="term" value="F:hydrolase activity"/>
    <property type="evidence" value="ECO:0007669"/>
    <property type="project" value="UniProtKB-KW"/>
</dbReference>
<dbReference type="GO" id="GO:0000155">
    <property type="term" value="F:phosphorelay sensor kinase activity"/>
    <property type="evidence" value="ECO:0007669"/>
    <property type="project" value="InterPro"/>
</dbReference>
<dbReference type="GO" id="GO:0071555">
    <property type="term" value="P:cell wall organization"/>
    <property type="evidence" value="ECO:0007669"/>
    <property type="project" value="InterPro"/>
</dbReference>
<dbReference type="CDD" id="cd16957">
    <property type="entry name" value="HATPase_LytS-like"/>
    <property type="match status" value="1"/>
</dbReference>
<dbReference type="Gene3D" id="1.10.1760.20">
    <property type="match status" value="1"/>
</dbReference>
<dbReference type="Gene3D" id="3.30.450.40">
    <property type="match status" value="1"/>
</dbReference>
<dbReference type="Gene3D" id="3.30.565.10">
    <property type="entry name" value="Histidine kinase-like ATPase, C-terminal domain"/>
    <property type="match status" value="1"/>
</dbReference>
<dbReference type="InterPro" id="IPR050640">
    <property type="entry name" value="Bact_2-comp_sensor_kinase"/>
</dbReference>
<dbReference type="InterPro" id="IPR003018">
    <property type="entry name" value="GAF"/>
</dbReference>
<dbReference type="InterPro" id="IPR029016">
    <property type="entry name" value="GAF-like_dom_sf"/>
</dbReference>
<dbReference type="InterPro" id="IPR036890">
    <property type="entry name" value="HATPase_C_sf"/>
</dbReference>
<dbReference type="InterPro" id="IPR010559">
    <property type="entry name" value="Sig_transdc_His_kin_internal"/>
</dbReference>
<dbReference type="InterPro" id="IPR011620">
    <property type="entry name" value="Sig_transdc_His_kinase_LytS_TM"/>
</dbReference>
<dbReference type="PANTHER" id="PTHR34220">
    <property type="entry name" value="SENSOR HISTIDINE KINASE YPDA"/>
    <property type="match status" value="1"/>
</dbReference>
<dbReference type="PANTHER" id="PTHR34220:SF7">
    <property type="entry name" value="SENSOR HISTIDINE KINASE YPDA"/>
    <property type="match status" value="1"/>
</dbReference>
<dbReference type="Pfam" id="PF07694">
    <property type="entry name" value="5TM-5TMR_LYT"/>
    <property type="match status" value="1"/>
</dbReference>
<dbReference type="Pfam" id="PF02518">
    <property type="entry name" value="HATPase_c"/>
    <property type="match status" value="1"/>
</dbReference>
<dbReference type="Pfam" id="PF06580">
    <property type="entry name" value="His_kinase"/>
    <property type="match status" value="1"/>
</dbReference>
<dbReference type="SMART" id="SM00065">
    <property type="entry name" value="GAF"/>
    <property type="match status" value="1"/>
</dbReference>
<dbReference type="SMART" id="SM00387">
    <property type="entry name" value="HATPase_c"/>
    <property type="match status" value="1"/>
</dbReference>
<dbReference type="SUPFAM" id="SSF55874">
    <property type="entry name" value="ATPase domain of HSP90 chaperone/DNA topoisomerase II/histidine kinase"/>
    <property type="match status" value="1"/>
</dbReference>
<dbReference type="SUPFAM" id="SSF55781">
    <property type="entry name" value="GAF domain-like"/>
    <property type="match status" value="1"/>
</dbReference>
<evidence type="ECO:0000250" key="1"/>
<evidence type="ECO:0000250" key="2">
    <source>
        <dbReference type="UniProtKB" id="Q53705"/>
    </source>
</evidence>
<evidence type="ECO:0000255" key="3"/>
<name>LYTS_STAAC</name>
<comment type="function">
    <text evidence="2">Member of the two-component regulatory system LytR/LytS that regulates genes involved in autolysis, programmed cell death, biofilm formation and cell wall metabolism. Also participates in sensing and responding to host defense cationic antimicrobial peptides (HDPs). Functions as a sensor protein kinase which is autophosphorylated at a histidine residue and transfers its phosphate group to the conserved aspartic acid residue in the regulatory domain of LytR. In turn, LytR binds to the upstream promoter regions of target genes including lrgA and lrgB, to positively regulate their expression. Also possesses a phosphatase activity that dephosphorylates and thus inactivates LytR.</text>
</comment>
<comment type="catalytic activity">
    <reaction evidence="2">
        <text>ATP + protein L-histidine = ADP + protein N-phospho-L-histidine.</text>
        <dbReference type="EC" id="2.7.13.3"/>
    </reaction>
</comment>
<comment type="subcellular location">
    <subcellularLocation>
        <location evidence="1">Cell membrane</location>
        <topology evidence="1">Multi-pass membrane protein</topology>
    </subcellularLocation>
</comment>
<comment type="PTM">
    <text evidence="2">Autophosphorylated on His-390.</text>
</comment>
<accession>Q5HJB6</accession>